<keyword id="KW-0067">ATP-binding</keyword>
<keyword id="KW-0153">Cholesterol metabolism</keyword>
<keyword id="KW-0276">Fatty acid metabolism</keyword>
<keyword id="KW-0436">Ligase</keyword>
<keyword id="KW-0443">Lipid metabolism</keyword>
<keyword id="KW-0547">Nucleotide-binding</keyword>
<keyword id="KW-1185">Reference proteome</keyword>
<keyword id="KW-0753">Steroid metabolism</keyword>
<keyword id="KW-1207">Sterol metabolism</keyword>
<sequence>MALNIADLAEHAIDAVPDRVALISGGDQLTYGQLEEKANRFAHYLIDQGVKKDDKVGLYCRNRIEIVIAMLGIVKAGAILVNVNFRYVEGELKYLFENSDMVALVHERRYSDRVANVLPETPDIKTILVVEDGSDDDYERFGGVEFYSALEKSSPERDFGPRSEDDIYLLYTGGTTGFPKGVMWRHEDIYRVLFGGTDFATGEPIEDEYGLAKQAAANPPMVRYPIPPMIHGATQSATWMALFAGGTVLLTPEFNPDEVWQAIHDHKVNLLFFTGDAMARPLLDSLLAAKDAGKEYDLSSLFLLASTAALFSTSLKEKFLELLPNRVITDSIGSSETGFGGTSIVAKGQSHTGGPRVTIDKNTVVLDDDGNEVKPGSGVRGVIAKRGHIPLGYYKDEKKTAETFKTINGVRYAIPGDYAEVEADGSVTMLGRGSVSINSGGEKIYPEEVEAALKGHPDVFDALVVGVPDPRFGQHVAAVVHPREGTRPTLAELDAHVRTEIAGYKVPRSLWLVDEIKRSPAGKPDYRWAKDVTEERPADEVHANHVAANAK</sequence>
<organism>
    <name type="scientific">Mycolicibacterium smegmatis (strain ATCC 700084 / mc(2)155)</name>
    <name type="common">Mycobacterium smegmatis</name>
    <dbReference type="NCBI Taxonomy" id="246196"/>
    <lineage>
        <taxon>Bacteria</taxon>
        <taxon>Bacillati</taxon>
        <taxon>Actinomycetota</taxon>
        <taxon>Actinomycetes</taxon>
        <taxon>Mycobacteriales</taxon>
        <taxon>Mycobacteriaceae</taxon>
        <taxon>Mycolicibacterium</taxon>
    </lineage>
</organism>
<comment type="function">
    <text evidence="1 2">Plays an essential role in degradation of the side chains of C-24 branched-chain sterols. Not essential for degradation of straight chain sterols such as cholesterol (PubMed:27164074). Catalyzes the activation of medium/long-chain fatty acids as acyl-coenzyme A (acyl-CoA), which are then transferred to the multifunctional polyketide synthase (PKS) type III for further chain extension. May be involved in the degradation of cholesterol via the degradation of the side chains of C-24 branched-chain sterols (By similarity).</text>
</comment>
<comment type="catalytic activity">
    <reaction evidence="1">
        <text>a medium-chain fatty acid + ATP + CoA = a medium-chain fatty acyl-CoA + AMP + diphosphate</text>
        <dbReference type="Rhea" id="RHEA:48340"/>
        <dbReference type="ChEBI" id="CHEBI:30616"/>
        <dbReference type="ChEBI" id="CHEBI:33019"/>
        <dbReference type="ChEBI" id="CHEBI:57287"/>
        <dbReference type="ChEBI" id="CHEBI:59558"/>
        <dbReference type="ChEBI" id="CHEBI:90546"/>
        <dbReference type="ChEBI" id="CHEBI:456215"/>
        <dbReference type="EC" id="6.2.1.2"/>
    </reaction>
    <physiologicalReaction direction="left-to-right" evidence="1">
        <dbReference type="Rhea" id="RHEA:48341"/>
    </physiologicalReaction>
</comment>
<comment type="catalytic activity">
    <reaction evidence="1">
        <text>a long-chain fatty acid + ATP + CoA = a long-chain fatty acyl-CoA + AMP + diphosphate</text>
        <dbReference type="Rhea" id="RHEA:15421"/>
        <dbReference type="ChEBI" id="CHEBI:30616"/>
        <dbReference type="ChEBI" id="CHEBI:33019"/>
        <dbReference type="ChEBI" id="CHEBI:57287"/>
        <dbReference type="ChEBI" id="CHEBI:57560"/>
        <dbReference type="ChEBI" id="CHEBI:83139"/>
        <dbReference type="ChEBI" id="CHEBI:456215"/>
        <dbReference type="EC" id="6.2.1.3"/>
    </reaction>
    <physiologicalReaction direction="left-to-right" evidence="1">
        <dbReference type="Rhea" id="RHEA:15422"/>
    </physiologicalReaction>
</comment>
<comment type="catalytic activity">
    <reaction evidence="1">
        <text>(25S)-3-oxocholest-4-en-26-oate + ATP + CoA = (25S)-3-oxocholest-4-en-26-oyl-CoA + AMP + diphosphate</text>
        <dbReference type="Rhea" id="RHEA:29291"/>
        <dbReference type="ChEBI" id="CHEBI:30616"/>
        <dbReference type="ChEBI" id="CHEBI:33019"/>
        <dbReference type="ChEBI" id="CHEBI:57287"/>
        <dbReference type="ChEBI" id="CHEBI:71541"/>
        <dbReference type="ChEBI" id="CHEBI:83819"/>
        <dbReference type="ChEBI" id="CHEBI:456215"/>
        <dbReference type="EC" id="6.2.1.42"/>
    </reaction>
    <physiologicalReaction direction="left-to-right" evidence="1">
        <dbReference type="Rhea" id="RHEA:29292"/>
    </physiologicalReaction>
</comment>
<comment type="pathway">
    <text evidence="6">Lipid metabolism; fatty acid biosynthesis.</text>
</comment>
<comment type="pathway">
    <text evidence="6">Steroid metabolism; cholesterol metabolism.</text>
</comment>
<comment type="disruption phenotype">
    <text evidence="2">Not required for growth on rich medium, nor with cholesterol as a sole energy source. Cannot use beta-sitosterol as a sole carbon and energy source, it can use 1,4-BNC (3-oxo-23,24-bisnorchola-1,4-dien-22-oic acid) an early intermediate of beta-sitosterol degradation.</text>
</comment>
<comment type="similarity">
    <text evidence="5">Belongs to the ATP-dependent AMP-binding enzyme family.</text>
</comment>
<accession>A0R4Q2</accession>
<accession>I7FTI4</accession>
<feature type="chain" id="PRO_0000456536" description="Medium/long-chain-fatty-acid--CoA/3-oxocholest-4-en-26-oate--CoA ligase">
    <location>
        <begin position="1"/>
        <end position="551"/>
    </location>
</feature>
<feature type="binding site" evidence="1">
    <location>
        <begin position="172"/>
        <end position="180"/>
    </location>
    <ligand>
        <name>ATP</name>
        <dbReference type="ChEBI" id="CHEBI:30616"/>
    </ligand>
</feature>
<feature type="binding site" evidence="1">
    <location>
        <position position="417"/>
    </location>
    <ligand>
        <name>ATP</name>
        <dbReference type="ChEBI" id="CHEBI:30616"/>
    </ligand>
</feature>
<feature type="binding site" evidence="1">
    <location>
        <position position="432"/>
    </location>
    <ligand>
        <name>ATP</name>
        <dbReference type="ChEBI" id="CHEBI:30616"/>
    </ligand>
</feature>
<feature type="binding site" evidence="1">
    <location>
        <position position="523"/>
    </location>
    <ligand>
        <name>ATP</name>
        <dbReference type="ChEBI" id="CHEBI:30616"/>
    </ligand>
</feature>
<gene>
    <name evidence="3 4" type="primary">fadD19</name>
    <name evidence="7" type="ordered locus">MSMEG_5914</name>
    <name evidence="8" type="ordered locus">MSMEI_5754</name>
</gene>
<protein>
    <recommendedName>
        <fullName evidence="1">Medium/long-chain-fatty-acid--CoA/3-oxocholest-4-en-26-oate--CoA ligase</fullName>
        <shortName evidence="1">FACL</shortName>
        <ecNumber evidence="1">6.2.1.2</ecNumber>
        <ecNumber evidence="1">6.2.1.3</ecNumber>
        <ecNumber evidence="1">6.2.1.42</ecNumber>
    </recommendedName>
    <alternativeName>
        <fullName evidence="1">Acyl-CoA synthetase</fullName>
    </alternativeName>
    <alternativeName>
        <fullName evidence="1">FACL19</fullName>
    </alternativeName>
    <alternativeName>
        <fullName evidence="1">Steroid-CoA ligase</fullName>
    </alternativeName>
    <alternativeName>
        <fullName evidence="1">Steroid-coenzyme A ligase</fullName>
    </alternativeName>
</protein>
<evidence type="ECO:0000250" key="1">
    <source>
        <dbReference type="UniProtKB" id="P9WQ51"/>
    </source>
</evidence>
<evidence type="ECO:0000269" key="2">
    <source>
    </source>
</evidence>
<evidence type="ECO:0000303" key="3">
    <source>
    </source>
</evidence>
<evidence type="ECO:0000303" key="4">
    <source>
    </source>
</evidence>
<evidence type="ECO:0000305" key="5"/>
<evidence type="ECO:0000305" key="6">
    <source>
    </source>
</evidence>
<evidence type="ECO:0000312" key="7">
    <source>
        <dbReference type="EMBL" id="ABK74402.1"/>
    </source>
</evidence>
<evidence type="ECO:0000312" key="8">
    <source>
        <dbReference type="EMBL" id="AFP42188.1"/>
    </source>
</evidence>
<name>FAC19_MYCS2</name>
<reference evidence="7" key="1">
    <citation type="submission" date="2006-10" db="EMBL/GenBank/DDBJ databases">
        <authorList>
            <person name="Fleischmann R.D."/>
            <person name="Dodson R.J."/>
            <person name="Haft D.H."/>
            <person name="Merkel J.S."/>
            <person name="Nelson W.C."/>
            <person name="Fraser C.M."/>
        </authorList>
    </citation>
    <scope>NUCLEOTIDE SEQUENCE [LARGE SCALE GENOMIC DNA]</scope>
    <source>
        <strain>ATCC 700084 / mc(2)155</strain>
    </source>
</reference>
<reference evidence="8" key="2">
    <citation type="journal article" date="2007" name="Genome Biol.">
        <title>Interrupted coding sequences in Mycobacterium smegmatis: authentic mutations or sequencing errors?</title>
        <authorList>
            <person name="Deshayes C."/>
            <person name="Perrodou E."/>
            <person name="Gallien S."/>
            <person name="Euphrasie D."/>
            <person name="Schaeffer C."/>
            <person name="Van-Dorsselaer A."/>
            <person name="Poch O."/>
            <person name="Lecompte O."/>
            <person name="Reyrat J.-M."/>
        </authorList>
    </citation>
    <scope>NUCLEOTIDE SEQUENCE [LARGE SCALE GENOMIC DNA]</scope>
    <source>
        <strain>ATCC 700084 / mc(2)155</strain>
    </source>
</reference>
<reference evidence="8" key="3">
    <citation type="journal article" date="2009" name="Genome Res.">
        <title>Ortho-proteogenomics: multiple proteomes investigation through orthology and a new MS-based protocol.</title>
        <authorList>
            <person name="Gallien S."/>
            <person name="Perrodou E."/>
            <person name="Carapito C."/>
            <person name="Deshayes C."/>
            <person name="Reyrat J.-M."/>
            <person name="Van Dorsselaer A."/>
            <person name="Poch O."/>
            <person name="Schaeffer C."/>
            <person name="Lecompte O."/>
        </authorList>
    </citation>
    <scope>NUCLEOTIDE SEQUENCE [LARGE SCALE GENOMIC DNA]</scope>
    <source>
        <strain>ATCC 700084 / mc(2)155</strain>
    </source>
</reference>
<reference key="4">
    <citation type="journal article" date="2016" name="Molecules">
        <title>The Role of fadD19 and echA19 in Sterol Side Chain Degradation by Mycobacterium smegmatis.</title>
        <authorList>
            <person name="Wronska N."/>
            <person name="Brzostek A."/>
            <person name="Szewczyk R."/>
            <person name="Sobon A."/>
            <person name="Dziadek J."/>
            <person name="Lisowska K."/>
        </authorList>
    </citation>
    <scope>FUNCTION</scope>
    <scope>DISRUPTION PHENOTYPE</scope>
    <source>
        <strain>ATCC 700084 / mc(2)155</strain>
    </source>
</reference>
<dbReference type="EC" id="6.2.1.2" evidence="1"/>
<dbReference type="EC" id="6.2.1.3" evidence="1"/>
<dbReference type="EC" id="6.2.1.42" evidence="1"/>
<dbReference type="EMBL" id="CP000480">
    <property type="protein sequence ID" value="ABK74402.1"/>
    <property type="molecule type" value="Genomic_DNA"/>
</dbReference>
<dbReference type="EMBL" id="CP001663">
    <property type="protein sequence ID" value="AFP42188.1"/>
    <property type="molecule type" value="Genomic_DNA"/>
</dbReference>
<dbReference type="RefSeq" id="WP_011730889.1">
    <property type="nucleotide sequence ID" value="NZ_SIJM01000017.1"/>
</dbReference>
<dbReference type="RefSeq" id="YP_890140.1">
    <property type="nucleotide sequence ID" value="NC_008596.1"/>
</dbReference>
<dbReference type="SMR" id="A0R4Q2"/>
<dbReference type="STRING" id="246196.MSMEG_5914"/>
<dbReference type="PaxDb" id="246196-MSMEI_5754"/>
<dbReference type="KEGG" id="msb:LJ00_29245"/>
<dbReference type="KEGG" id="msg:MSMEI_5754"/>
<dbReference type="KEGG" id="msm:MSMEG_5914"/>
<dbReference type="PATRIC" id="fig|246196.19.peg.5754"/>
<dbReference type="eggNOG" id="COG0318">
    <property type="taxonomic scope" value="Bacteria"/>
</dbReference>
<dbReference type="OrthoDB" id="3443462at2"/>
<dbReference type="UniPathway" id="UPA00094"/>
<dbReference type="UniPathway" id="UPA00296"/>
<dbReference type="Proteomes" id="UP000000757">
    <property type="component" value="Chromosome"/>
</dbReference>
<dbReference type="Proteomes" id="UP000006158">
    <property type="component" value="Chromosome"/>
</dbReference>
<dbReference type="GO" id="GO:0016878">
    <property type="term" value="F:acid-thiol ligase activity"/>
    <property type="evidence" value="ECO:0007669"/>
    <property type="project" value="UniProtKB-ARBA"/>
</dbReference>
<dbReference type="GO" id="GO:0005524">
    <property type="term" value="F:ATP binding"/>
    <property type="evidence" value="ECO:0007669"/>
    <property type="project" value="UniProtKB-KW"/>
</dbReference>
<dbReference type="GO" id="GO:0008203">
    <property type="term" value="P:cholesterol metabolic process"/>
    <property type="evidence" value="ECO:0007669"/>
    <property type="project" value="UniProtKB-UniPathway"/>
</dbReference>
<dbReference type="GO" id="GO:0006633">
    <property type="term" value="P:fatty acid biosynthetic process"/>
    <property type="evidence" value="ECO:0007669"/>
    <property type="project" value="UniProtKB-UniPathway"/>
</dbReference>
<dbReference type="CDD" id="cd05924">
    <property type="entry name" value="FACL_like_5"/>
    <property type="match status" value="1"/>
</dbReference>
<dbReference type="Gene3D" id="3.30.300.30">
    <property type="match status" value="1"/>
</dbReference>
<dbReference type="Gene3D" id="3.40.50.12780">
    <property type="entry name" value="N-terminal domain of ligase-like"/>
    <property type="match status" value="1"/>
</dbReference>
<dbReference type="InterPro" id="IPR025110">
    <property type="entry name" value="AMP-bd_C"/>
</dbReference>
<dbReference type="InterPro" id="IPR045851">
    <property type="entry name" value="AMP-bd_C_sf"/>
</dbReference>
<dbReference type="InterPro" id="IPR020845">
    <property type="entry name" value="AMP-binding_CS"/>
</dbReference>
<dbReference type="InterPro" id="IPR000873">
    <property type="entry name" value="AMP-dep_synth/lig_dom"/>
</dbReference>
<dbReference type="InterPro" id="IPR042099">
    <property type="entry name" value="ANL_N_sf"/>
</dbReference>
<dbReference type="InterPro" id="IPR050237">
    <property type="entry name" value="ATP-dep_AMP-bd_enzyme"/>
</dbReference>
<dbReference type="NCBIfam" id="NF005863">
    <property type="entry name" value="PRK07798.1"/>
    <property type="match status" value="1"/>
</dbReference>
<dbReference type="PANTHER" id="PTHR43767">
    <property type="entry name" value="LONG-CHAIN-FATTY-ACID--COA LIGASE"/>
    <property type="match status" value="1"/>
</dbReference>
<dbReference type="PANTHER" id="PTHR43767:SF1">
    <property type="entry name" value="NONRIBOSOMAL PEPTIDE SYNTHASE PES1 (EUROFUNG)-RELATED"/>
    <property type="match status" value="1"/>
</dbReference>
<dbReference type="Pfam" id="PF00501">
    <property type="entry name" value="AMP-binding"/>
    <property type="match status" value="1"/>
</dbReference>
<dbReference type="Pfam" id="PF13193">
    <property type="entry name" value="AMP-binding_C"/>
    <property type="match status" value="1"/>
</dbReference>
<dbReference type="SUPFAM" id="SSF56801">
    <property type="entry name" value="Acetyl-CoA synthetase-like"/>
    <property type="match status" value="1"/>
</dbReference>
<dbReference type="PROSITE" id="PS00455">
    <property type="entry name" value="AMP_BINDING"/>
    <property type="match status" value="1"/>
</dbReference>
<proteinExistence type="inferred from homology"/>